<comment type="function">
    <text evidence="1">Catalyzes the reversible conversion of 2-phosphoglycerate (2-PG) into phosphoenolpyruvate (PEP). It is essential for the degradation of carbohydrates via glycolysis.</text>
</comment>
<comment type="catalytic activity">
    <reaction evidence="1">
        <text>(2R)-2-phosphoglycerate = phosphoenolpyruvate + H2O</text>
        <dbReference type="Rhea" id="RHEA:10164"/>
        <dbReference type="ChEBI" id="CHEBI:15377"/>
        <dbReference type="ChEBI" id="CHEBI:58289"/>
        <dbReference type="ChEBI" id="CHEBI:58702"/>
        <dbReference type="EC" id="4.2.1.11"/>
    </reaction>
</comment>
<comment type="cofactor">
    <cofactor evidence="1">
        <name>Mg(2+)</name>
        <dbReference type="ChEBI" id="CHEBI:18420"/>
    </cofactor>
    <text evidence="1">Binds a second Mg(2+) ion via substrate during catalysis.</text>
</comment>
<comment type="pathway">
    <text evidence="1">Carbohydrate degradation; glycolysis; pyruvate from D-glyceraldehyde 3-phosphate: step 4/5.</text>
</comment>
<comment type="subcellular location">
    <subcellularLocation>
        <location evidence="1">Cytoplasm</location>
    </subcellularLocation>
    <subcellularLocation>
        <location evidence="1">Secreted</location>
    </subcellularLocation>
    <subcellularLocation>
        <location evidence="1">Cell surface</location>
    </subcellularLocation>
    <text evidence="1">Fractions of enolase are present in both the cytoplasm and on the cell surface.</text>
</comment>
<comment type="similarity">
    <text evidence="1">Belongs to the enolase family.</text>
</comment>
<reference key="1">
    <citation type="journal article" date="2002" name="DNA Res.">
        <title>Complete genomic sequence of nitrogen-fixing symbiotic bacterium Bradyrhizobium japonicum USDA110.</title>
        <authorList>
            <person name="Kaneko T."/>
            <person name="Nakamura Y."/>
            <person name="Sato S."/>
            <person name="Minamisawa K."/>
            <person name="Uchiumi T."/>
            <person name="Sasamoto S."/>
            <person name="Watanabe A."/>
            <person name="Idesawa K."/>
            <person name="Iriguchi M."/>
            <person name="Kawashima K."/>
            <person name="Kohara M."/>
            <person name="Matsumoto M."/>
            <person name="Shimpo S."/>
            <person name="Tsuruoka H."/>
            <person name="Wada T."/>
            <person name="Yamada M."/>
            <person name="Tabata S."/>
        </authorList>
    </citation>
    <scope>NUCLEOTIDE SEQUENCE [LARGE SCALE GENOMIC DNA]</scope>
    <source>
        <strain>JCM 10833 / BCRC 13528 / IAM 13628 / NBRC 14792 / USDA 110</strain>
    </source>
</reference>
<name>ENO_BRADU</name>
<sequence>MTAIIDIIGREILDSRGNPTVEVDVVLEDGALGRAAVPSGASTGAHEAVELRDGDKARYLGKGVTKAVGAVNGEIFEALSGLDVEQQAQIDQIMIDLDGTPNKSRLGANAILGVSLACAKAAANSLDMPLYRYVGGTSARLLPVPMMNIINGGVHADNPIDFQEFMILPVGASSFAEGLRYGAEVFHTLKSELKKAGHNTNVGDEGGFAPNLPSADAALEFVMNAIGKAGFKAGSDIVIGLDCASTEFFKDGKYVYEGEGKTRSISEQAKYLADLVARYPIVTIEDGMSEDDMDGWKELTDLIGKKCQLVGDDLFVTNVKRLAEGIKAGRANSILIKVNQIGTLTETLAAVEMAHKAGYTSVMSHRSGETEDSTIADLAVATNCGQIKTGSLARSDRTAKYNQLLRIEQQLGKQALYGGKAALKALA</sequence>
<accession>Q89KV6</accession>
<feature type="chain" id="PRO_0000133852" description="Enolase">
    <location>
        <begin position="1"/>
        <end position="427"/>
    </location>
</feature>
<feature type="active site" description="Proton donor" evidence="1">
    <location>
        <position position="205"/>
    </location>
</feature>
<feature type="active site" description="Proton acceptor" evidence="1">
    <location>
        <position position="337"/>
    </location>
</feature>
<feature type="binding site" evidence="1">
    <location>
        <position position="163"/>
    </location>
    <ligand>
        <name>(2R)-2-phosphoglycerate</name>
        <dbReference type="ChEBI" id="CHEBI:58289"/>
    </ligand>
</feature>
<feature type="binding site" evidence="1">
    <location>
        <position position="242"/>
    </location>
    <ligand>
        <name>Mg(2+)</name>
        <dbReference type="ChEBI" id="CHEBI:18420"/>
    </ligand>
</feature>
<feature type="binding site" evidence="1">
    <location>
        <position position="285"/>
    </location>
    <ligand>
        <name>Mg(2+)</name>
        <dbReference type="ChEBI" id="CHEBI:18420"/>
    </ligand>
</feature>
<feature type="binding site" evidence="1">
    <location>
        <position position="312"/>
    </location>
    <ligand>
        <name>Mg(2+)</name>
        <dbReference type="ChEBI" id="CHEBI:18420"/>
    </ligand>
</feature>
<feature type="binding site" evidence="1">
    <location>
        <position position="337"/>
    </location>
    <ligand>
        <name>(2R)-2-phosphoglycerate</name>
        <dbReference type="ChEBI" id="CHEBI:58289"/>
    </ligand>
</feature>
<feature type="binding site" evidence="1">
    <location>
        <position position="366"/>
    </location>
    <ligand>
        <name>(2R)-2-phosphoglycerate</name>
        <dbReference type="ChEBI" id="CHEBI:58289"/>
    </ligand>
</feature>
<feature type="binding site" evidence="1">
    <location>
        <position position="367"/>
    </location>
    <ligand>
        <name>(2R)-2-phosphoglycerate</name>
        <dbReference type="ChEBI" id="CHEBI:58289"/>
    </ligand>
</feature>
<feature type="binding site" evidence="1">
    <location>
        <position position="388"/>
    </location>
    <ligand>
        <name>(2R)-2-phosphoglycerate</name>
        <dbReference type="ChEBI" id="CHEBI:58289"/>
    </ligand>
</feature>
<proteinExistence type="inferred from homology"/>
<dbReference type="EC" id="4.2.1.11" evidence="1"/>
<dbReference type="EMBL" id="BA000040">
    <property type="protein sequence ID" value="BAC50059.1"/>
    <property type="molecule type" value="Genomic_DNA"/>
</dbReference>
<dbReference type="RefSeq" id="NP_771434.1">
    <property type="nucleotide sequence ID" value="NC_004463.1"/>
</dbReference>
<dbReference type="RefSeq" id="WP_011087562.1">
    <property type="nucleotide sequence ID" value="NC_004463.1"/>
</dbReference>
<dbReference type="SMR" id="Q89KV6"/>
<dbReference type="FunCoup" id="Q89KV6">
    <property type="interactions" value="635"/>
</dbReference>
<dbReference type="STRING" id="224911.AAV28_21265"/>
<dbReference type="EnsemblBacteria" id="BAC50059">
    <property type="protein sequence ID" value="BAC50059"/>
    <property type="gene ID" value="BAC50059"/>
</dbReference>
<dbReference type="GeneID" id="46491799"/>
<dbReference type="KEGG" id="bja:bll4794"/>
<dbReference type="PATRIC" id="fig|224911.44.peg.4633"/>
<dbReference type="eggNOG" id="COG0148">
    <property type="taxonomic scope" value="Bacteria"/>
</dbReference>
<dbReference type="HOGENOM" id="CLU_031223_2_1_5"/>
<dbReference type="InParanoid" id="Q89KV6"/>
<dbReference type="OrthoDB" id="9804716at2"/>
<dbReference type="PhylomeDB" id="Q89KV6"/>
<dbReference type="UniPathway" id="UPA00109">
    <property type="reaction ID" value="UER00187"/>
</dbReference>
<dbReference type="Proteomes" id="UP000002526">
    <property type="component" value="Chromosome"/>
</dbReference>
<dbReference type="GO" id="GO:0009986">
    <property type="term" value="C:cell surface"/>
    <property type="evidence" value="ECO:0007669"/>
    <property type="project" value="UniProtKB-SubCell"/>
</dbReference>
<dbReference type="GO" id="GO:0005576">
    <property type="term" value="C:extracellular region"/>
    <property type="evidence" value="ECO:0007669"/>
    <property type="project" value="UniProtKB-SubCell"/>
</dbReference>
<dbReference type="GO" id="GO:0000015">
    <property type="term" value="C:phosphopyruvate hydratase complex"/>
    <property type="evidence" value="ECO:0000318"/>
    <property type="project" value="GO_Central"/>
</dbReference>
<dbReference type="GO" id="GO:0000287">
    <property type="term" value="F:magnesium ion binding"/>
    <property type="evidence" value="ECO:0007669"/>
    <property type="project" value="UniProtKB-UniRule"/>
</dbReference>
<dbReference type="GO" id="GO:0004634">
    <property type="term" value="F:phosphopyruvate hydratase activity"/>
    <property type="evidence" value="ECO:0000318"/>
    <property type="project" value="GO_Central"/>
</dbReference>
<dbReference type="GO" id="GO:0006096">
    <property type="term" value="P:glycolytic process"/>
    <property type="evidence" value="ECO:0000318"/>
    <property type="project" value="GO_Central"/>
</dbReference>
<dbReference type="CDD" id="cd03313">
    <property type="entry name" value="enolase"/>
    <property type="match status" value="1"/>
</dbReference>
<dbReference type="FunFam" id="3.20.20.120:FF:000001">
    <property type="entry name" value="Enolase"/>
    <property type="match status" value="1"/>
</dbReference>
<dbReference type="FunFam" id="3.30.390.10:FF:000001">
    <property type="entry name" value="Enolase"/>
    <property type="match status" value="1"/>
</dbReference>
<dbReference type="Gene3D" id="3.20.20.120">
    <property type="entry name" value="Enolase-like C-terminal domain"/>
    <property type="match status" value="1"/>
</dbReference>
<dbReference type="Gene3D" id="3.30.390.10">
    <property type="entry name" value="Enolase-like, N-terminal domain"/>
    <property type="match status" value="1"/>
</dbReference>
<dbReference type="HAMAP" id="MF_00318">
    <property type="entry name" value="Enolase"/>
    <property type="match status" value="1"/>
</dbReference>
<dbReference type="InterPro" id="IPR000941">
    <property type="entry name" value="Enolase"/>
</dbReference>
<dbReference type="InterPro" id="IPR036849">
    <property type="entry name" value="Enolase-like_C_sf"/>
</dbReference>
<dbReference type="InterPro" id="IPR029017">
    <property type="entry name" value="Enolase-like_N"/>
</dbReference>
<dbReference type="InterPro" id="IPR020810">
    <property type="entry name" value="Enolase_C"/>
</dbReference>
<dbReference type="InterPro" id="IPR020809">
    <property type="entry name" value="Enolase_CS"/>
</dbReference>
<dbReference type="InterPro" id="IPR020811">
    <property type="entry name" value="Enolase_N"/>
</dbReference>
<dbReference type="NCBIfam" id="TIGR01060">
    <property type="entry name" value="eno"/>
    <property type="match status" value="1"/>
</dbReference>
<dbReference type="PANTHER" id="PTHR11902">
    <property type="entry name" value="ENOLASE"/>
    <property type="match status" value="1"/>
</dbReference>
<dbReference type="PANTHER" id="PTHR11902:SF1">
    <property type="entry name" value="ENOLASE"/>
    <property type="match status" value="1"/>
</dbReference>
<dbReference type="Pfam" id="PF00113">
    <property type="entry name" value="Enolase_C"/>
    <property type="match status" value="1"/>
</dbReference>
<dbReference type="Pfam" id="PF03952">
    <property type="entry name" value="Enolase_N"/>
    <property type="match status" value="1"/>
</dbReference>
<dbReference type="PIRSF" id="PIRSF001400">
    <property type="entry name" value="Enolase"/>
    <property type="match status" value="1"/>
</dbReference>
<dbReference type="PRINTS" id="PR00148">
    <property type="entry name" value="ENOLASE"/>
</dbReference>
<dbReference type="SFLD" id="SFLDF00002">
    <property type="entry name" value="enolase"/>
    <property type="match status" value="1"/>
</dbReference>
<dbReference type="SFLD" id="SFLDG00178">
    <property type="entry name" value="enolase"/>
    <property type="match status" value="1"/>
</dbReference>
<dbReference type="SMART" id="SM01192">
    <property type="entry name" value="Enolase_C"/>
    <property type="match status" value="1"/>
</dbReference>
<dbReference type="SMART" id="SM01193">
    <property type="entry name" value="Enolase_N"/>
    <property type="match status" value="1"/>
</dbReference>
<dbReference type="SUPFAM" id="SSF51604">
    <property type="entry name" value="Enolase C-terminal domain-like"/>
    <property type="match status" value="1"/>
</dbReference>
<dbReference type="SUPFAM" id="SSF54826">
    <property type="entry name" value="Enolase N-terminal domain-like"/>
    <property type="match status" value="1"/>
</dbReference>
<dbReference type="PROSITE" id="PS00164">
    <property type="entry name" value="ENOLASE"/>
    <property type="match status" value="1"/>
</dbReference>
<evidence type="ECO:0000255" key="1">
    <source>
        <dbReference type="HAMAP-Rule" id="MF_00318"/>
    </source>
</evidence>
<organism>
    <name type="scientific">Bradyrhizobium diazoefficiens (strain JCM 10833 / BCRC 13528 / IAM 13628 / NBRC 14792 / USDA 110)</name>
    <dbReference type="NCBI Taxonomy" id="224911"/>
    <lineage>
        <taxon>Bacteria</taxon>
        <taxon>Pseudomonadati</taxon>
        <taxon>Pseudomonadota</taxon>
        <taxon>Alphaproteobacteria</taxon>
        <taxon>Hyphomicrobiales</taxon>
        <taxon>Nitrobacteraceae</taxon>
        <taxon>Bradyrhizobium</taxon>
    </lineage>
</organism>
<keyword id="KW-0963">Cytoplasm</keyword>
<keyword id="KW-0324">Glycolysis</keyword>
<keyword id="KW-0456">Lyase</keyword>
<keyword id="KW-0460">Magnesium</keyword>
<keyword id="KW-0479">Metal-binding</keyword>
<keyword id="KW-1185">Reference proteome</keyword>
<keyword id="KW-0964">Secreted</keyword>
<protein>
    <recommendedName>
        <fullName evidence="1">Enolase</fullName>
        <ecNumber evidence="1">4.2.1.11</ecNumber>
    </recommendedName>
    <alternativeName>
        <fullName evidence="1">2-phospho-D-glycerate hydro-lyase</fullName>
    </alternativeName>
    <alternativeName>
        <fullName evidence="1">2-phosphoglycerate dehydratase</fullName>
    </alternativeName>
</protein>
<gene>
    <name evidence="1" type="primary">eno</name>
    <name type="ordered locus">bll4794</name>
</gene>